<feature type="initiator methionine" description="Removed" evidence="3">
    <location>
        <position position="1"/>
    </location>
</feature>
<feature type="chain" id="PRO_0000052591" description="Hemoglobin subunit alpha">
    <location>
        <begin position="2"/>
        <end position="142"/>
    </location>
</feature>
<feature type="peptide" id="PRO_0000455851" description="Hemopressin" evidence="2">
    <location>
        <begin position="96"/>
        <end position="104"/>
    </location>
</feature>
<feature type="domain" description="Globin" evidence="5">
    <location>
        <begin position="2"/>
        <end position="142"/>
    </location>
</feature>
<feature type="binding site" evidence="5">
    <location>
        <position position="59"/>
    </location>
    <ligand>
        <name>O2</name>
        <dbReference type="ChEBI" id="CHEBI:15379"/>
    </ligand>
</feature>
<feature type="binding site" description="proximal binding residue" evidence="5">
    <location>
        <position position="88"/>
    </location>
    <ligand>
        <name>heme b</name>
        <dbReference type="ChEBI" id="CHEBI:60344"/>
    </ligand>
    <ligandPart>
        <name>Fe</name>
        <dbReference type="ChEBI" id="CHEBI:18248"/>
    </ligandPart>
</feature>
<feature type="modified residue" description="Phosphoserine" evidence="4">
    <location>
        <position position="4"/>
    </location>
</feature>
<feature type="modified residue" description="N6-succinyllysine" evidence="1">
    <location>
        <position position="8"/>
    </location>
</feature>
<feature type="modified residue" description="N6-succinyllysine" evidence="1">
    <location>
        <position position="12"/>
    </location>
</feature>
<feature type="modified residue" description="N6-acetyllysine; alternate" evidence="4">
    <location>
        <position position="17"/>
    </location>
</feature>
<feature type="modified residue" description="N6-succinyllysine; alternate" evidence="1">
    <location>
        <position position="17"/>
    </location>
</feature>
<feature type="modified residue" description="Phosphotyrosine" evidence="4">
    <location>
        <position position="25"/>
    </location>
</feature>
<feature type="modified residue" description="Phosphoserine" evidence="4">
    <location>
        <position position="36"/>
    </location>
</feature>
<feature type="modified residue" description="N6-succinyllysine" evidence="1">
    <location>
        <position position="41"/>
    </location>
</feature>
<feature type="modified residue" description="Phosphoserine" evidence="4">
    <location>
        <position position="50"/>
    </location>
</feature>
<feature type="modified residue" description="Phosphothreonine" evidence="1">
    <location>
        <position position="109"/>
    </location>
</feature>
<feature type="modified residue" description="Phosphoserine" evidence="1">
    <location>
        <position position="125"/>
    </location>
</feature>
<feature type="modified residue" description="Phosphoserine" evidence="1">
    <location>
        <position position="132"/>
    </location>
</feature>
<feature type="modified residue" description="Phosphothreonine" evidence="1">
    <location>
        <position position="135"/>
    </location>
</feature>
<feature type="modified residue" description="Phosphothreonine" evidence="1">
    <location>
        <position position="138"/>
    </location>
</feature>
<feature type="modified residue" description="Phosphoserine" evidence="1">
    <location>
        <position position="139"/>
    </location>
</feature>
<feature type="helix" evidence="7">
    <location>
        <begin position="5"/>
        <end position="18"/>
    </location>
</feature>
<feature type="helix" evidence="7">
    <location>
        <begin position="19"/>
        <end position="21"/>
    </location>
</feature>
<feature type="helix" evidence="7">
    <location>
        <begin position="22"/>
        <end position="36"/>
    </location>
</feature>
<feature type="helix" evidence="7">
    <location>
        <begin position="38"/>
        <end position="44"/>
    </location>
</feature>
<feature type="helix" evidence="7">
    <location>
        <begin position="54"/>
        <end position="71"/>
    </location>
</feature>
<feature type="turn" evidence="7">
    <location>
        <begin position="72"/>
        <end position="75"/>
    </location>
</feature>
<feature type="helix" evidence="7">
    <location>
        <begin position="77"/>
        <end position="80"/>
    </location>
</feature>
<feature type="helix" evidence="7">
    <location>
        <begin position="82"/>
        <end position="88"/>
    </location>
</feature>
<feature type="turn" evidence="7">
    <location>
        <begin position="89"/>
        <end position="91"/>
    </location>
</feature>
<feature type="helix" evidence="7">
    <location>
        <begin position="96"/>
        <end position="114"/>
    </location>
</feature>
<feature type="helix" evidence="7">
    <location>
        <begin position="115"/>
        <end position="117"/>
    </location>
</feature>
<feature type="helix" evidence="7">
    <location>
        <begin position="120"/>
        <end position="137"/>
    </location>
</feature>
<organism>
    <name type="scientific">Cavia porcellus</name>
    <name type="common">Guinea pig</name>
    <dbReference type="NCBI Taxonomy" id="10141"/>
    <lineage>
        <taxon>Eukaryota</taxon>
        <taxon>Metazoa</taxon>
        <taxon>Chordata</taxon>
        <taxon>Craniata</taxon>
        <taxon>Vertebrata</taxon>
        <taxon>Euteleostomi</taxon>
        <taxon>Mammalia</taxon>
        <taxon>Eutheria</taxon>
        <taxon>Euarchontoglires</taxon>
        <taxon>Glires</taxon>
        <taxon>Rodentia</taxon>
        <taxon>Hystricomorpha</taxon>
        <taxon>Caviidae</taxon>
        <taxon>Cavia</taxon>
    </lineage>
</organism>
<name>HBA_CAVPO</name>
<gene>
    <name type="primary">HBA</name>
</gene>
<accession>P01947</accession>
<sequence>MVLSAADKNNVKTTWDKIGGHAAEYVAEGLTRMFTSFPTTKTYFHHIDVSPGSGDIKAHGKKVADALTTAVGHLDDLPTALSTLSDVHAHKLRVDPVNFKFLNHCLLVTLAAHLGADFTPSIHASLDKFFASVSTVLTSKYR</sequence>
<proteinExistence type="evidence at protein level"/>
<dbReference type="PIR" id="A02269">
    <property type="entry name" value="HAGP"/>
</dbReference>
<dbReference type="PDB" id="3A0G">
    <property type="method" value="X-ray"/>
    <property type="resolution" value="2.50 A"/>
    <property type="chains" value="A=2-142"/>
</dbReference>
<dbReference type="PDB" id="3HYU">
    <property type="method" value="X-ray"/>
    <property type="resolution" value="1.67 A"/>
    <property type="chains" value="A=2-142"/>
</dbReference>
<dbReference type="PDBsum" id="3A0G"/>
<dbReference type="PDBsum" id="3HYU"/>
<dbReference type="SMR" id="P01947"/>
<dbReference type="FunCoup" id="P01947">
    <property type="interactions" value="11"/>
</dbReference>
<dbReference type="STRING" id="10141.ENSCPOP00000000235"/>
<dbReference type="Ensembl" id="ENSCPOT00000000270.3">
    <property type="protein sequence ID" value="ENSCPOP00000000235.2"/>
    <property type="gene ID" value="ENSCPOG00000000267.4"/>
</dbReference>
<dbReference type="GeneID" id="100712878"/>
<dbReference type="KEGG" id="cpoc:100712878"/>
<dbReference type="VEuPathDB" id="HostDB:ENSCPOG00000000267"/>
<dbReference type="eggNOG" id="KOG3378">
    <property type="taxonomic scope" value="Eukaryota"/>
</dbReference>
<dbReference type="GeneTree" id="ENSGT00940000154590"/>
<dbReference type="HOGENOM" id="CLU_003827_10_2_1"/>
<dbReference type="InParanoid" id="P01947"/>
<dbReference type="OMA" id="MFTSFPT"/>
<dbReference type="OrthoDB" id="8751793at2759"/>
<dbReference type="TreeFam" id="TF332328"/>
<dbReference type="EvolutionaryTrace" id="P01947"/>
<dbReference type="Proteomes" id="UP000005447">
    <property type="component" value="Unassembled WGS sequence"/>
</dbReference>
<dbReference type="Bgee" id="ENSCPOG00000000267">
    <property type="expression patterns" value="Expressed in adult mammalian kidney and 13 other cell types or tissues"/>
</dbReference>
<dbReference type="GO" id="GO:0072562">
    <property type="term" value="C:blood microparticle"/>
    <property type="evidence" value="ECO:0007669"/>
    <property type="project" value="TreeGrafter"/>
</dbReference>
<dbReference type="GO" id="GO:0031838">
    <property type="term" value="C:haptoglobin-hemoglobin complex"/>
    <property type="evidence" value="ECO:0007669"/>
    <property type="project" value="TreeGrafter"/>
</dbReference>
<dbReference type="GO" id="GO:0005833">
    <property type="term" value="C:hemoglobin complex"/>
    <property type="evidence" value="ECO:0007669"/>
    <property type="project" value="InterPro"/>
</dbReference>
<dbReference type="GO" id="GO:0031720">
    <property type="term" value="F:haptoglobin binding"/>
    <property type="evidence" value="ECO:0007669"/>
    <property type="project" value="TreeGrafter"/>
</dbReference>
<dbReference type="GO" id="GO:0020037">
    <property type="term" value="F:heme binding"/>
    <property type="evidence" value="ECO:0007669"/>
    <property type="project" value="InterPro"/>
</dbReference>
<dbReference type="GO" id="GO:0046872">
    <property type="term" value="F:metal ion binding"/>
    <property type="evidence" value="ECO:0007669"/>
    <property type="project" value="UniProtKB-KW"/>
</dbReference>
<dbReference type="GO" id="GO:0043177">
    <property type="term" value="F:organic acid binding"/>
    <property type="evidence" value="ECO:0007669"/>
    <property type="project" value="TreeGrafter"/>
</dbReference>
<dbReference type="GO" id="GO:0019825">
    <property type="term" value="F:oxygen binding"/>
    <property type="evidence" value="ECO:0007669"/>
    <property type="project" value="InterPro"/>
</dbReference>
<dbReference type="GO" id="GO:0005344">
    <property type="term" value="F:oxygen carrier activity"/>
    <property type="evidence" value="ECO:0007669"/>
    <property type="project" value="UniProtKB-KW"/>
</dbReference>
<dbReference type="GO" id="GO:0004601">
    <property type="term" value="F:peroxidase activity"/>
    <property type="evidence" value="ECO:0007669"/>
    <property type="project" value="TreeGrafter"/>
</dbReference>
<dbReference type="GO" id="GO:0042744">
    <property type="term" value="P:hydrogen peroxide catabolic process"/>
    <property type="evidence" value="ECO:0007669"/>
    <property type="project" value="TreeGrafter"/>
</dbReference>
<dbReference type="CDD" id="cd08927">
    <property type="entry name" value="Hb-alpha-like"/>
    <property type="match status" value="1"/>
</dbReference>
<dbReference type="FunFam" id="1.10.490.10:FF:000002">
    <property type="entry name" value="Hemoglobin subunit alpha"/>
    <property type="match status" value="1"/>
</dbReference>
<dbReference type="Gene3D" id="1.10.490.10">
    <property type="entry name" value="Globins"/>
    <property type="match status" value="1"/>
</dbReference>
<dbReference type="InterPro" id="IPR000971">
    <property type="entry name" value="Globin"/>
</dbReference>
<dbReference type="InterPro" id="IPR009050">
    <property type="entry name" value="Globin-like_sf"/>
</dbReference>
<dbReference type="InterPro" id="IPR012292">
    <property type="entry name" value="Globin/Proto"/>
</dbReference>
<dbReference type="InterPro" id="IPR002338">
    <property type="entry name" value="Hemoglobin_a-typ"/>
</dbReference>
<dbReference type="InterPro" id="IPR050056">
    <property type="entry name" value="Hemoglobin_oxygen_transport"/>
</dbReference>
<dbReference type="PANTHER" id="PTHR11442">
    <property type="entry name" value="HEMOGLOBIN FAMILY MEMBER"/>
    <property type="match status" value="1"/>
</dbReference>
<dbReference type="PANTHER" id="PTHR11442:SF48">
    <property type="entry name" value="HEMOGLOBIN SUBUNIT ALPHA"/>
    <property type="match status" value="1"/>
</dbReference>
<dbReference type="Pfam" id="PF00042">
    <property type="entry name" value="Globin"/>
    <property type="match status" value="1"/>
</dbReference>
<dbReference type="PRINTS" id="PR00612">
    <property type="entry name" value="ALPHAHAEM"/>
</dbReference>
<dbReference type="SUPFAM" id="SSF46458">
    <property type="entry name" value="Globin-like"/>
    <property type="match status" value="1"/>
</dbReference>
<dbReference type="PROSITE" id="PS01033">
    <property type="entry name" value="GLOBIN"/>
    <property type="match status" value="1"/>
</dbReference>
<evidence type="ECO:0000250" key="1">
    <source>
        <dbReference type="UniProtKB" id="P01942"/>
    </source>
</evidence>
<evidence type="ECO:0000250" key="2">
    <source>
        <dbReference type="UniProtKB" id="P01946"/>
    </source>
</evidence>
<evidence type="ECO:0000250" key="3">
    <source>
        <dbReference type="UniProtKB" id="P18969"/>
    </source>
</evidence>
<evidence type="ECO:0000250" key="4">
    <source>
        <dbReference type="UniProtKB" id="P69905"/>
    </source>
</evidence>
<evidence type="ECO:0000255" key="5">
    <source>
        <dbReference type="PROSITE-ProRule" id="PRU00238"/>
    </source>
</evidence>
<evidence type="ECO:0000269" key="6">
    <source>
    </source>
</evidence>
<evidence type="ECO:0007829" key="7">
    <source>
        <dbReference type="PDB" id="3HYU"/>
    </source>
</evidence>
<reference key="1">
    <citation type="journal article" date="1979" name="Hoppe-Seyler's Z. Physiol. Chem.">
        <title>Respiration at high altitudes, phosphate-protein interaction: the sequence of hemoglobins from guinea pig and dromedary.</title>
        <authorList>
            <person name="Braunitzer G."/>
            <person name="Schrank B."/>
            <person name="Stangl A."/>
            <person name="Wiesner H."/>
        </authorList>
    </citation>
    <scope>PROTEIN SEQUENCE OF 2-142</scope>
</reference>
<reference key="2">
    <citation type="journal article" date="2010" name="PLoS ONE">
        <title>Structure of the altitude adapted hemoglobin of guinea pig in the R2-state.</title>
        <authorList>
            <person name="Pairet B."/>
            <person name="Jaenicke E."/>
        </authorList>
    </citation>
    <scope>X-RAY CRYSTALLOGRAPHY (1.67 ANGSTROMS) OF 2-142</scope>
    <scope>SUBUNIT</scope>
</reference>
<keyword id="KW-0002">3D-structure</keyword>
<keyword id="KW-0007">Acetylation</keyword>
<keyword id="KW-0903">Direct protein sequencing</keyword>
<keyword id="KW-0349">Heme</keyword>
<keyword id="KW-0408">Iron</keyword>
<keyword id="KW-0479">Metal-binding</keyword>
<keyword id="KW-0561">Oxygen transport</keyword>
<keyword id="KW-0597">Phosphoprotein</keyword>
<keyword id="KW-1185">Reference proteome</keyword>
<keyword id="KW-0813">Transport</keyword>
<protein>
    <recommendedName>
        <fullName>Hemoglobin subunit alpha</fullName>
    </recommendedName>
    <alternativeName>
        <fullName>Alpha-globin</fullName>
    </alternativeName>
    <alternativeName>
        <fullName>Hemoglobin alpha chain</fullName>
    </alternativeName>
    <component>
        <recommendedName>
            <fullName evidence="2">Hemopressin</fullName>
        </recommendedName>
    </component>
</protein>
<comment type="function">
    <text>Involved in oxygen transport from the lung to the various peripheral tissues.</text>
</comment>
<comment type="function">
    <molecule>Hemopressin</molecule>
    <text evidence="2">Hemopressin acts as an antagonist peptide of the cannabinoid receptor CNR1. Hemopressin-binding efficiently blocks cannabinoid receptor CNR1 and subsequent signaling.</text>
</comment>
<comment type="subunit">
    <text evidence="6">Heterotetramer of two alpha chains and two beta chains.</text>
</comment>
<comment type="tissue specificity">
    <text>Red blood cells.</text>
</comment>
<comment type="similarity">
    <text evidence="5">Belongs to the globin family.</text>
</comment>